<feature type="propeptide" id="PRO_0000397568" description="Removed in mature form; by autocatalysis" evidence="1">
    <location>
        <begin position="1"/>
        <end position="65"/>
    </location>
</feature>
<feature type="chain" id="PRO_0000397569" description="Proteasome subunit beta">
    <location>
        <begin position="66"/>
        <end position="294"/>
    </location>
</feature>
<feature type="active site" description="Nucleophile" evidence="1">
    <location>
        <position position="66"/>
    </location>
</feature>
<keyword id="KW-0068">Autocatalytic cleavage</keyword>
<keyword id="KW-0963">Cytoplasm</keyword>
<keyword id="KW-0378">Hydrolase</keyword>
<keyword id="KW-0645">Protease</keyword>
<keyword id="KW-0647">Proteasome</keyword>
<keyword id="KW-0888">Threonine protease</keyword>
<keyword id="KW-0865">Zymogen</keyword>
<accession>Q0SIF9</accession>
<dbReference type="EC" id="3.4.25.1" evidence="1"/>
<dbReference type="EMBL" id="CP000431">
    <property type="protein sequence ID" value="ABG92677.1"/>
    <property type="status" value="ALT_INIT"/>
    <property type="molecule type" value="Genomic_DNA"/>
</dbReference>
<dbReference type="RefSeq" id="WP_037229527.1">
    <property type="nucleotide sequence ID" value="NC_008268.1"/>
</dbReference>
<dbReference type="SMR" id="Q0SIF9"/>
<dbReference type="MEROPS" id="T01.005"/>
<dbReference type="KEGG" id="rha:RHA1_ro00844"/>
<dbReference type="eggNOG" id="COG0638">
    <property type="taxonomic scope" value="Bacteria"/>
</dbReference>
<dbReference type="HOGENOM" id="CLU_035750_2_0_11"/>
<dbReference type="OrthoDB" id="5174038at2"/>
<dbReference type="UniPathway" id="UPA00997"/>
<dbReference type="Proteomes" id="UP000008710">
    <property type="component" value="Chromosome"/>
</dbReference>
<dbReference type="GO" id="GO:0005737">
    <property type="term" value="C:cytoplasm"/>
    <property type="evidence" value="ECO:0007669"/>
    <property type="project" value="UniProtKB-SubCell"/>
</dbReference>
<dbReference type="GO" id="GO:0019774">
    <property type="term" value="C:proteasome core complex, beta-subunit complex"/>
    <property type="evidence" value="ECO:0007669"/>
    <property type="project" value="UniProtKB-UniRule"/>
</dbReference>
<dbReference type="GO" id="GO:0004298">
    <property type="term" value="F:threonine-type endopeptidase activity"/>
    <property type="evidence" value="ECO:0007669"/>
    <property type="project" value="UniProtKB-UniRule"/>
</dbReference>
<dbReference type="GO" id="GO:0019941">
    <property type="term" value="P:modification-dependent protein catabolic process"/>
    <property type="evidence" value="ECO:0007669"/>
    <property type="project" value="UniProtKB-UniRule"/>
</dbReference>
<dbReference type="GO" id="GO:0010498">
    <property type="term" value="P:proteasomal protein catabolic process"/>
    <property type="evidence" value="ECO:0007669"/>
    <property type="project" value="UniProtKB-UniRule"/>
</dbReference>
<dbReference type="CDD" id="cd01906">
    <property type="entry name" value="proteasome_protease_HslV"/>
    <property type="match status" value="1"/>
</dbReference>
<dbReference type="FunFam" id="3.60.20.10:FF:000046">
    <property type="entry name" value="Proteasome subunit beta"/>
    <property type="match status" value="1"/>
</dbReference>
<dbReference type="Gene3D" id="3.60.20.10">
    <property type="entry name" value="Glutamine Phosphoribosylpyrophosphate, subunit 1, domain 1"/>
    <property type="match status" value="1"/>
</dbReference>
<dbReference type="HAMAP" id="MF_02113_B">
    <property type="entry name" value="Proteasome_B_B"/>
    <property type="match status" value="1"/>
</dbReference>
<dbReference type="InterPro" id="IPR029055">
    <property type="entry name" value="Ntn_hydrolases_N"/>
</dbReference>
<dbReference type="InterPro" id="IPR001353">
    <property type="entry name" value="Proteasome_sua/b"/>
</dbReference>
<dbReference type="InterPro" id="IPR023333">
    <property type="entry name" value="Proteasome_suB-type"/>
</dbReference>
<dbReference type="InterPro" id="IPR022483">
    <property type="entry name" value="PSB_actinobac"/>
</dbReference>
<dbReference type="NCBIfam" id="TIGR03690">
    <property type="entry name" value="20S_bact_beta"/>
    <property type="match status" value="1"/>
</dbReference>
<dbReference type="PANTHER" id="PTHR32194:SF0">
    <property type="entry name" value="ATP-DEPENDENT PROTEASE SUBUNIT HSLV"/>
    <property type="match status" value="1"/>
</dbReference>
<dbReference type="PANTHER" id="PTHR32194">
    <property type="entry name" value="METALLOPROTEASE TLDD"/>
    <property type="match status" value="1"/>
</dbReference>
<dbReference type="Pfam" id="PF00227">
    <property type="entry name" value="Proteasome"/>
    <property type="match status" value="1"/>
</dbReference>
<dbReference type="SUPFAM" id="SSF56235">
    <property type="entry name" value="N-terminal nucleophile aminohydrolases (Ntn hydrolases)"/>
    <property type="match status" value="1"/>
</dbReference>
<dbReference type="PROSITE" id="PS51476">
    <property type="entry name" value="PROTEASOME_BETA_2"/>
    <property type="match status" value="1"/>
</dbReference>
<comment type="function">
    <text evidence="1">Component of the proteasome core, a large protease complex with broad specificity involved in protein degradation.</text>
</comment>
<comment type="catalytic activity">
    <reaction evidence="1">
        <text>Cleavage of peptide bonds with very broad specificity.</text>
        <dbReference type="EC" id="3.4.25.1"/>
    </reaction>
</comment>
<comment type="activity regulation">
    <text evidence="1">The formation of the proteasomal ATPase ARC-20S proteasome complex, likely via the docking of the C-termini of ARC into the intersubunit pockets in the alpha-rings, may trigger opening of the gate for substrate entry. Interconversion between the open-gate and close-gate conformations leads to a dynamic regulation of the 20S proteasome proteolysis activity.</text>
</comment>
<comment type="pathway">
    <text evidence="1">Protein degradation; proteasomal Pup-dependent pathway.</text>
</comment>
<comment type="subunit">
    <text evidence="1">The 20S proteasome core is composed of 14 alpha and 14 beta subunits that assemble into four stacked heptameric rings, resulting in a barrel-shaped structure. The two inner rings, each composed of seven catalytic beta subunits, are sandwiched by two outer rings, each composed of seven alpha subunits. The catalytic chamber with the active sites is on the inside of the barrel. Has a gated structure, the ends of the cylinder being occluded by the N-termini of the alpha-subunits. Is capped by the proteasome-associated ATPase, ARC.</text>
</comment>
<comment type="subcellular location">
    <subcellularLocation>
        <location evidence="1">Cytoplasm</location>
    </subcellularLocation>
</comment>
<comment type="similarity">
    <text evidence="1">Belongs to the peptidase T1B family.</text>
</comment>
<comment type="sequence caution" evidence="2">
    <conflict type="erroneous initiation">
        <sequence resource="EMBL-CDS" id="ABG92677"/>
    </conflict>
    <text>Truncated N-terminus.</text>
</comment>
<name>PSB_RHOJR</name>
<proteinExistence type="inferred from homology"/>
<evidence type="ECO:0000255" key="1">
    <source>
        <dbReference type="HAMAP-Rule" id="MF_02113"/>
    </source>
</evidence>
<evidence type="ECO:0000305" key="2"/>
<gene>
    <name evidence="1" type="primary">prcB</name>
    <name type="ordered locus">RHA1_ro00844</name>
</gene>
<organism>
    <name type="scientific">Rhodococcus jostii (strain RHA1)</name>
    <dbReference type="NCBI Taxonomy" id="101510"/>
    <lineage>
        <taxon>Bacteria</taxon>
        <taxon>Bacillati</taxon>
        <taxon>Actinomycetota</taxon>
        <taxon>Actinomycetes</taxon>
        <taxon>Mycobacteriales</taxon>
        <taxon>Nocardiaceae</taxon>
        <taxon>Rhodococcus</taxon>
    </lineage>
</organism>
<protein>
    <recommendedName>
        <fullName evidence="1">Proteasome subunit beta</fullName>
        <ecNumber evidence="1">3.4.25.1</ecNumber>
    </recommendedName>
    <alternativeName>
        <fullName evidence="1">20S proteasome beta subunit</fullName>
    </alternativeName>
    <alternativeName>
        <fullName evidence="1">Proteasome core protein PrcB</fullName>
    </alternativeName>
</protein>
<sequence>MTADRPALRTGDGETRLSFGSNLSSFTEYLRGHAPELLPENRIGHRSHSTRGGDGMESGDLAPHGTTIVALTYKGGVLLAGDRRATQGNLIASRDVEKVYVTDEYSAAGIAGTAGIAIELVRLFAVELEHYEKIEGVQLTFDGKANRLASMVRGNLGAAMQGLAVVPLLVGYDLDADDEAHAGRIVSYDVVGGRYEERAGYHAVGSGSLFAKSALKKIYSPDSDEETALRAAIESLYDAADDDSATGGPDLTRGIYPTAVTITQAGAVHVSEETTSELARRIVAERTEEGGSAR</sequence>
<reference key="1">
    <citation type="journal article" date="2006" name="Proc. Natl. Acad. Sci. U.S.A.">
        <title>The complete genome of Rhodococcus sp. RHA1 provides insights into a catabolic powerhouse.</title>
        <authorList>
            <person name="McLeod M.P."/>
            <person name="Warren R.L."/>
            <person name="Hsiao W.W.L."/>
            <person name="Araki N."/>
            <person name="Myhre M."/>
            <person name="Fernandes C."/>
            <person name="Miyazawa D."/>
            <person name="Wong W."/>
            <person name="Lillquist A.L."/>
            <person name="Wang D."/>
            <person name="Dosanjh M."/>
            <person name="Hara H."/>
            <person name="Petrescu A."/>
            <person name="Morin R.D."/>
            <person name="Yang G."/>
            <person name="Stott J.M."/>
            <person name="Schein J.E."/>
            <person name="Shin H."/>
            <person name="Smailus D."/>
            <person name="Siddiqui A.S."/>
            <person name="Marra M.A."/>
            <person name="Jones S.J.M."/>
            <person name="Holt R."/>
            <person name="Brinkman F.S.L."/>
            <person name="Miyauchi K."/>
            <person name="Fukuda M."/>
            <person name="Davies J.E."/>
            <person name="Mohn W.W."/>
            <person name="Eltis L.D."/>
        </authorList>
    </citation>
    <scope>NUCLEOTIDE SEQUENCE [LARGE SCALE GENOMIC DNA]</scope>
    <source>
        <strain>RHA1</strain>
    </source>
</reference>